<sequence>MEEYYMNTAIELARRGEGQTQPNPLVGAVVVKKRQIVGMGAHLQYGEAHAEVHAINMAGSLAKGADLYVTLEPCSHYGKTPPCAELIMKSGIKRVFIAVEDPNPLVAGKGITMLEEAGIEVKTGLLRQQAEELNKMFLHFMRTGLPYVTLKAAASLDGKTATETGDSKWITSEAARLDAQQYRKSHQRILVGAGTVKADNPSLTCRLPDAVKQPVRVILDTKLTVPETANVLTDGAAPTWIFTAAGSDVRKKDRLTALGIKVFTLETDRIHIPEVLSILAENGIMSVYVEGGASVHGSFVKAGCFDELHFYFAPILIGGTLAPSLISGEGFQSMKDVPHLQFTQITQIGPDIKLTAIPKDGKDGDDVYRNR</sequence>
<accession>P70814</accession>
<comment type="function">
    <text>Converts 2,5-diamino-6-(ribosylamino)-4(3h)-pyrimidinone 5'-phosphate into 5-amino-6-(ribosylamino)-2,4(1h,3h)-pyrimidinedione 5'-phosphate.</text>
</comment>
<comment type="catalytic activity">
    <reaction>
        <text>2,5-diamino-6-hydroxy-4-(5-phosphoribosylamino)-pyrimidine + H2O + H(+) = 5-amino-6-(5-phospho-D-ribosylamino)uracil + NH4(+)</text>
        <dbReference type="Rhea" id="RHEA:21868"/>
        <dbReference type="ChEBI" id="CHEBI:15377"/>
        <dbReference type="ChEBI" id="CHEBI:15378"/>
        <dbReference type="ChEBI" id="CHEBI:28938"/>
        <dbReference type="ChEBI" id="CHEBI:58453"/>
        <dbReference type="ChEBI" id="CHEBI:58614"/>
        <dbReference type="EC" id="3.5.4.26"/>
    </reaction>
</comment>
<comment type="catalytic activity">
    <reaction>
        <text>5-amino-6-(5-phospho-D-ribitylamino)uracil + NADP(+) = 5-amino-6-(5-phospho-D-ribosylamino)uracil + NADPH + H(+)</text>
        <dbReference type="Rhea" id="RHEA:17845"/>
        <dbReference type="ChEBI" id="CHEBI:15378"/>
        <dbReference type="ChEBI" id="CHEBI:57783"/>
        <dbReference type="ChEBI" id="CHEBI:58349"/>
        <dbReference type="ChEBI" id="CHEBI:58421"/>
        <dbReference type="ChEBI" id="CHEBI:58453"/>
        <dbReference type="EC" id="1.1.1.193"/>
    </reaction>
</comment>
<comment type="cofactor">
    <cofactor evidence="1">
        <name>Zn(2+)</name>
        <dbReference type="ChEBI" id="CHEBI:29105"/>
    </cofactor>
    <text evidence="1">Binds 1 zinc ion.</text>
</comment>
<comment type="pathway">
    <text>Cofactor biosynthesis; riboflavin biosynthesis; 5-amino-6-(D-ribitylamino)uracil from GTP: step 2/4.</text>
</comment>
<comment type="pathway">
    <text>Cofactor biosynthesis; riboflavin biosynthesis; 5-amino-6-(D-ribitylamino)uracil from GTP: step 3/4.</text>
</comment>
<comment type="similarity">
    <text evidence="3">In the N-terminal section; belongs to the cytidine and deoxycytidylate deaminase family.</text>
</comment>
<comment type="similarity">
    <text evidence="3">In the C-terminal section; belongs to the HTP reductase family.</text>
</comment>
<name>RIBD_BACAM</name>
<protein>
    <recommendedName>
        <fullName>Riboflavin biosynthesis protein RibD</fullName>
    </recommendedName>
    <domain>
        <recommendedName>
            <fullName>Diaminohydroxyphosphoribosylaminopyrimidine deaminase</fullName>
            <shortName>DRAP deaminase</shortName>
            <ecNumber>3.5.4.26</ecNumber>
        </recommendedName>
        <alternativeName>
            <fullName>Riboflavin-specific deaminase</fullName>
        </alternativeName>
    </domain>
    <domain>
        <recommendedName>
            <fullName>5-amino-6-(5-phosphoribosylamino)uracil reductase</fullName>
            <ecNumber>1.1.1.193</ecNumber>
        </recommendedName>
        <alternativeName>
            <fullName>HTP reductase</fullName>
        </alternativeName>
    </domain>
</protein>
<keyword id="KW-0378">Hydrolase</keyword>
<keyword id="KW-0479">Metal-binding</keyword>
<keyword id="KW-0511">Multifunctional enzyme</keyword>
<keyword id="KW-0521">NADP</keyword>
<keyword id="KW-0560">Oxidoreductase</keyword>
<keyword id="KW-0686">Riboflavin biosynthesis</keyword>
<keyword id="KW-0862">Zinc</keyword>
<organism>
    <name type="scientific">Bacillus amyloliquefaciens</name>
    <name type="common">Bacillus velezensis</name>
    <dbReference type="NCBI Taxonomy" id="1390"/>
    <lineage>
        <taxon>Bacteria</taxon>
        <taxon>Bacillati</taxon>
        <taxon>Bacillota</taxon>
        <taxon>Bacilli</taxon>
        <taxon>Bacillales</taxon>
        <taxon>Bacillaceae</taxon>
        <taxon>Bacillus</taxon>
        <taxon>Bacillus amyloliquefaciens group</taxon>
    </lineage>
</organism>
<dbReference type="EC" id="3.5.4.26"/>
<dbReference type="EC" id="1.1.1.193"/>
<dbReference type="EMBL" id="X95955">
    <property type="protein sequence ID" value="CAA65189.1"/>
    <property type="molecule type" value="Genomic_DNA"/>
</dbReference>
<dbReference type="PIR" id="T50541">
    <property type="entry name" value="T50541"/>
</dbReference>
<dbReference type="SMR" id="P70814"/>
<dbReference type="STRING" id="692420.BAMF_2227"/>
<dbReference type="eggNOG" id="COG0117">
    <property type="taxonomic scope" value="Bacteria"/>
</dbReference>
<dbReference type="eggNOG" id="COG1985">
    <property type="taxonomic scope" value="Bacteria"/>
</dbReference>
<dbReference type="UniPathway" id="UPA00275">
    <property type="reaction ID" value="UER00401"/>
</dbReference>
<dbReference type="UniPathway" id="UPA00275">
    <property type="reaction ID" value="UER00402"/>
</dbReference>
<dbReference type="GO" id="GO:0008703">
    <property type="term" value="F:5-amino-6-(5-phosphoribosylamino)uracil reductase activity"/>
    <property type="evidence" value="ECO:0007669"/>
    <property type="project" value="UniProtKB-EC"/>
</dbReference>
<dbReference type="GO" id="GO:0008835">
    <property type="term" value="F:diaminohydroxyphosphoribosylaminopyrimidine deaminase activity"/>
    <property type="evidence" value="ECO:0007669"/>
    <property type="project" value="UniProtKB-EC"/>
</dbReference>
<dbReference type="GO" id="GO:0050661">
    <property type="term" value="F:NADP binding"/>
    <property type="evidence" value="ECO:0007669"/>
    <property type="project" value="InterPro"/>
</dbReference>
<dbReference type="GO" id="GO:0008270">
    <property type="term" value="F:zinc ion binding"/>
    <property type="evidence" value="ECO:0007669"/>
    <property type="project" value="InterPro"/>
</dbReference>
<dbReference type="GO" id="GO:0009231">
    <property type="term" value="P:riboflavin biosynthetic process"/>
    <property type="evidence" value="ECO:0007669"/>
    <property type="project" value="UniProtKB-UniPathway"/>
</dbReference>
<dbReference type="CDD" id="cd01284">
    <property type="entry name" value="Riboflavin_deaminase-reductase"/>
    <property type="match status" value="1"/>
</dbReference>
<dbReference type="FunFam" id="3.40.140.10:FF:000025">
    <property type="entry name" value="Riboflavin biosynthesis protein RibD"/>
    <property type="match status" value="1"/>
</dbReference>
<dbReference type="Gene3D" id="3.40.140.10">
    <property type="entry name" value="Cytidine Deaminase, domain 2"/>
    <property type="match status" value="1"/>
</dbReference>
<dbReference type="Gene3D" id="3.40.430.10">
    <property type="entry name" value="Dihydrofolate Reductase, subunit A"/>
    <property type="match status" value="1"/>
</dbReference>
<dbReference type="InterPro" id="IPR016192">
    <property type="entry name" value="APOBEC/CMP_deaminase_Zn-bd"/>
</dbReference>
<dbReference type="InterPro" id="IPR002125">
    <property type="entry name" value="CMP_dCMP_dom"/>
</dbReference>
<dbReference type="InterPro" id="IPR016193">
    <property type="entry name" value="Cytidine_deaminase-like"/>
</dbReference>
<dbReference type="InterPro" id="IPR024072">
    <property type="entry name" value="DHFR-like_dom_sf"/>
</dbReference>
<dbReference type="InterPro" id="IPR004794">
    <property type="entry name" value="Eubact_RibD"/>
</dbReference>
<dbReference type="InterPro" id="IPR011549">
    <property type="entry name" value="RibD_C"/>
</dbReference>
<dbReference type="InterPro" id="IPR002734">
    <property type="entry name" value="RibDG_C"/>
</dbReference>
<dbReference type="InterPro" id="IPR050765">
    <property type="entry name" value="Riboflavin_Biosynth_HTPR"/>
</dbReference>
<dbReference type="NCBIfam" id="TIGR00326">
    <property type="entry name" value="eubact_ribD"/>
    <property type="match status" value="1"/>
</dbReference>
<dbReference type="NCBIfam" id="TIGR00227">
    <property type="entry name" value="ribD_Cterm"/>
    <property type="match status" value="1"/>
</dbReference>
<dbReference type="PANTHER" id="PTHR38011:SF7">
    <property type="entry name" value="2,5-DIAMINO-6-RIBOSYLAMINO-4(3H)-PYRIMIDINONE 5'-PHOSPHATE REDUCTASE"/>
    <property type="match status" value="1"/>
</dbReference>
<dbReference type="PANTHER" id="PTHR38011">
    <property type="entry name" value="DIHYDROFOLATE REDUCTASE FAMILY PROTEIN (AFU_ORTHOLOGUE AFUA_8G06820)"/>
    <property type="match status" value="1"/>
</dbReference>
<dbReference type="Pfam" id="PF00383">
    <property type="entry name" value="dCMP_cyt_deam_1"/>
    <property type="match status" value="1"/>
</dbReference>
<dbReference type="Pfam" id="PF01872">
    <property type="entry name" value="RibD_C"/>
    <property type="match status" value="1"/>
</dbReference>
<dbReference type="PIRSF" id="PIRSF006769">
    <property type="entry name" value="RibD"/>
    <property type="match status" value="1"/>
</dbReference>
<dbReference type="SUPFAM" id="SSF53927">
    <property type="entry name" value="Cytidine deaminase-like"/>
    <property type="match status" value="1"/>
</dbReference>
<dbReference type="SUPFAM" id="SSF53597">
    <property type="entry name" value="Dihydrofolate reductase-like"/>
    <property type="match status" value="1"/>
</dbReference>
<dbReference type="PROSITE" id="PS00903">
    <property type="entry name" value="CYT_DCMP_DEAMINASES_1"/>
    <property type="match status" value="1"/>
</dbReference>
<dbReference type="PROSITE" id="PS51747">
    <property type="entry name" value="CYT_DCMP_DEAMINASES_2"/>
    <property type="match status" value="1"/>
</dbReference>
<feature type="chain" id="PRO_0000171714" description="Riboflavin biosynthesis protein RibD">
    <location>
        <begin position="1"/>
        <end position="371"/>
    </location>
</feature>
<feature type="domain" description="CMP/dCMP-type deaminase" evidence="2">
    <location>
        <begin position="1"/>
        <end position="122"/>
    </location>
</feature>
<feature type="region of interest" description="Deaminase">
    <location>
        <begin position="1"/>
        <end position="144"/>
    </location>
</feature>
<feature type="region of interest" description="Reductase">
    <location>
        <begin position="145"/>
        <end position="371"/>
    </location>
</feature>
<feature type="active site" description="Proton donor" evidence="1">
    <location>
        <position position="51"/>
    </location>
</feature>
<feature type="binding site" evidence="1">
    <location>
        <position position="49"/>
    </location>
    <ligand>
        <name>Zn(2+)</name>
        <dbReference type="ChEBI" id="CHEBI:29105"/>
        <note>catalytic</note>
    </ligand>
</feature>
<feature type="binding site" evidence="1">
    <location>
        <position position="74"/>
    </location>
    <ligand>
        <name>Zn(2+)</name>
        <dbReference type="ChEBI" id="CHEBI:29105"/>
        <note>catalytic</note>
    </ligand>
</feature>
<feature type="binding site" evidence="1">
    <location>
        <position position="83"/>
    </location>
    <ligand>
        <name>Zn(2+)</name>
        <dbReference type="ChEBI" id="CHEBI:29105"/>
        <note>catalytic</note>
    </ligand>
</feature>
<feature type="binding site" evidence="1">
    <location>
        <position position="153"/>
    </location>
    <ligand>
        <name>NADP(+)</name>
        <dbReference type="ChEBI" id="CHEBI:58349"/>
    </ligand>
</feature>
<feature type="binding site" evidence="1">
    <location>
        <position position="167"/>
    </location>
    <ligand>
        <name>substrate</name>
    </ligand>
</feature>
<feature type="binding site" evidence="1">
    <location>
        <position position="169"/>
    </location>
    <ligand>
        <name>NADP(+)</name>
        <dbReference type="ChEBI" id="CHEBI:58349"/>
    </ligand>
</feature>
<feature type="binding site" evidence="1">
    <location>
        <position position="183"/>
    </location>
    <ligand>
        <name>substrate</name>
    </ligand>
</feature>
<feature type="binding site" evidence="1">
    <location>
        <position position="195"/>
    </location>
    <ligand>
        <name>NADP(+)</name>
        <dbReference type="ChEBI" id="CHEBI:58349"/>
    </ligand>
</feature>
<feature type="binding site" evidence="1">
    <location>
        <position position="199"/>
    </location>
    <ligand>
        <name>NADP(+)</name>
        <dbReference type="ChEBI" id="CHEBI:58349"/>
    </ligand>
</feature>
<feature type="binding site" evidence="1">
    <location>
        <position position="203"/>
    </location>
    <ligand>
        <name>substrate</name>
    </ligand>
</feature>
<feature type="binding site" evidence="1">
    <location>
        <position position="206"/>
    </location>
    <ligand>
        <name>substrate</name>
    </ligand>
</feature>
<feature type="binding site" evidence="1">
    <location>
        <position position="221"/>
    </location>
    <ligand>
        <name>NADP(+)</name>
        <dbReference type="ChEBI" id="CHEBI:58349"/>
    </ligand>
</feature>
<feature type="binding site" evidence="1">
    <location>
        <position position="290"/>
    </location>
    <ligand>
        <name>substrate</name>
    </ligand>
</feature>
<feature type="binding site" evidence="1">
    <location>
        <begin position="292"/>
        <end position="298"/>
    </location>
    <ligand>
        <name>NADP(+)</name>
        <dbReference type="ChEBI" id="CHEBI:58349"/>
    </ligand>
</feature>
<evidence type="ECO:0000250" key="1"/>
<evidence type="ECO:0000255" key="2">
    <source>
        <dbReference type="PROSITE-ProRule" id="PRU01083"/>
    </source>
</evidence>
<evidence type="ECO:0000305" key="3"/>
<gene>
    <name type="primary">ribD</name>
    <name type="synonym">ribG</name>
</gene>
<reference key="1">
    <citation type="journal article" date="1997" name="Mol. Biol. (Mosk.)">
        <title>Riboflavin biosynthetic genes in Bacillus amyloliquefaciens: primary structure, organization and regulation of activity.</title>
        <authorList>
            <person name="Gusarov I.I."/>
            <person name="Kreneva R.A."/>
            <person name="Podcharniaev D.A."/>
            <person name="Iomantas I.U.V."/>
            <person name="Abalakina E.G."/>
            <person name="Stoinova N.V."/>
            <person name="Perumov D.A."/>
            <person name="Kozlov I.U.I."/>
        </authorList>
    </citation>
    <scope>NUCLEOTIDE SEQUENCE [GENOMIC DNA]</scope>
    <source>
        <strain>A 50</strain>
    </source>
</reference>
<proteinExistence type="inferred from homology"/>